<organism>
    <name type="scientific">Methanococcus maripaludis (strain C5 / ATCC BAA-1333)</name>
    <dbReference type="NCBI Taxonomy" id="402880"/>
    <lineage>
        <taxon>Archaea</taxon>
        <taxon>Methanobacteriati</taxon>
        <taxon>Methanobacteriota</taxon>
        <taxon>Methanomada group</taxon>
        <taxon>Methanococci</taxon>
        <taxon>Methanococcales</taxon>
        <taxon>Methanococcaceae</taxon>
        <taxon>Methanococcus</taxon>
    </lineage>
</organism>
<name>RL30E_METM5</name>
<accession>A4FWF4</accession>
<keyword id="KW-0687">Ribonucleoprotein</keyword>
<keyword id="KW-0689">Ribosomal protein</keyword>
<comment type="similarity">
    <text evidence="1">Belongs to the eukaryotic ribosomal protein eL30 family.</text>
</comment>
<protein>
    <recommendedName>
        <fullName evidence="1">Large ribosomal subunit protein eL30</fullName>
    </recommendedName>
    <alternativeName>
        <fullName evidence="2">50S ribosomal protein L30e</fullName>
    </alternativeName>
</protein>
<gene>
    <name evidence="1" type="primary">rpl30e</name>
    <name type="ordered locus">MmarC5_0213</name>
</gene>
<feature type="chain" id="PRO_1000014324" description="Large ribosomal subunit protein eL30">
    <location>
        <begin position="1"/>
        <end position="106"/>
    </location>
</feature>
<evidence type="ECO:0000255" key="1">
    <source>
        <dbReference type="HAMAP-Rule" id="MF_00481"/>
    </source>
</evidence>
<evidence type="ECO:0000305" key="2"/>
<reference key="1">
    <citation type="submission" date="2007-03" db="EMBL/GenBank/DDBJ databases">
        <title>Complete sequence of chromosome of Methanococcus maripaludis C5.</title>
        <authorList>
            <consortium name="US DOE Joint Genome Institute"/>
            <person name="Copeland A."/>
            <person name="Lucas S."/>
            <person name="Lapidus A."/>
            <person name="Barry K."/>
            <person name="Glavina del Rio T."/>
            <person name="Dalin E."/>
            <person name="Tice H."/>
            <person name="Pitluck S."/>
            <person name="Chertkov O."/>
            <person name="Brettin T."/>
            <person name="Bruce D."/>
            <person name="Han C."/>
            <person name="Detter J.C."/>
            <person name="Schmutz J."/>
            <person name="Larimer F."/>
            <person name="Land M."/>
            <person name="Hauser L."/>
            <person name="Kyrpides N."/>
            <person name="Mikhailova N."/>
            <person name="Sieprawska-Lupa M."/>
            <person name="Whitman W.B."/>
            <person name="Richardson P."/>
        </authorList>
    </citation>
    <scope>NUCLEOTIDE SEQUENCE [LARGE SCALE GENOMIC DNA]</scope>
    <source>
        <strain>C5 / ATCC BAA-1333</strain>
    </source>
</reference>
<dbReference type="EMBL" id="CP000609">
    <property type="protein sequence ID" value="ABO34529.1"/>
    <property type="molecule type" value="Genomic_DNA"/>
</dbReference>
<dbReference type="RefSeq" id="WP_011867987.1">
    <property type="nucleotide sequence ID" value="NC_009135.1"/>
</dbReference>
<dbReference type="SMR" id="A4FWF4"/>
<dbReference type="STRING" id="402880.MmarC5_0213"/>
<dbReference type="GeneID" id="4928453"/>
<dbReference type="KEGG" id="mmq:MmarC5_0213"/>
<dbReference type="eggNOG" id="arCOG01752">
    <property type="taxonomic scope" value="Archaea"/>
</dbReference>
<dbReference type="HOGENOM" id="CLU_130502_1_0_2"/>
<dbReference type="OrthoDB" id="10759at2157"/>
<dbReference type="Proteomes" id="UP000000253">
    <property type="component" value="Chromosome"/>
</dbReference>
<dbReference type="GO" id="GO:0022625">
    <property type="term" value="C:cytosolic large ribosomal subunit"/>
    <property type="evidence" value="ECO:0007669"/>
    <property type="project" value="InterPro"/>
</dbReference>
<dbReference type="GO" id="GO:0003723">
    <property type="term" value="F:RNA binding"/>
    <property type="evidence" value="ECO:0007669"/>
    <property type="project" value="InterPro"/>
</dbReference>
<dbReference type="GO" id="GO:0003735">
    <property type="term" value="F:structural constituent of ribosome"/>
    <property type="evidence" value="ECO:0007669"/>
    <property type="project" value="InterPro"/>
</dbReference>
<dbReference type="GO" id="GO:0006412">
    <property type="term" value="P:translation"/>
    <property type="evidence" value="ECO:0007669"/>
    <property type="project" value="UniProtKB-UniRule"/>
</dbReference>
<dbReference type="Gene3D" id="3.30.1330.30">
    <property type="match status" value="1"/>
</dbReference>
<dbReference type="HAMAP" id="MF_00481">
    <property type="entry name" value="Ribosomal_eL30"/>
    <property type="match status" value="1"/>
</dbReference>
<dbReference type="InterPro" id="IPR000231">
    <property type="entry name" value="Ribosomal_eL30"/>
</dbReference>
<dbReference type="InterPro" id="IPR039109">
    <property type="entry name" value="Ribosomal_eL30-like"/>
</dbReference>
<dbReference type="InterPro" id="IPR029064">
    <property type="entry name" value="Ribosomal_eL30-like_sf"/>
</dbReference>
<dbReference type="InterPro" id="IPR022991">
    <property type="entry name" value="Ribosomal_eL30_CS"/>
</dbReference>
<dbReference type="InterPro" id="IPR004038">
    <property type="entry name" value="Ribosomal_eL8/eL30/eS12/Gad45"/>
</dbReference>
<dbReference type="NCBIfam" id="NF002172">
    <property type="entry name" value="PRK01018.1"/>
    <property type="match status" value="1"/>
</dbReference>
<dbReference type="PANTHER" id="PTHR11449">
    <property type="entry name" value="RIBOSOMAL PROTEIN L30"/>
    <property type="match status" value="1"/>
</dbReference>
<dbReference type="Pfam" id="PF01248">
    <property type="entry name" value="Ribosomal_L7Ae"/>
    <property type="match status" value="1"/>
</dbReference>
<dbReference type="SUPFAM" id="SSF55315">
    <property type="entry name" value="L30e-like"/>
    <property type="match status" value="1"/>
</dbReference>
<dbReference type="PROSITE" id="PS00709">
    <property type="entry name" value="RIBOSOMAL_L30E_1"/>
    <property type="match status" value="1"/>
</dbReference>
<dbReference type="PROSITE" id="PS00993">
    <property type="entry name" value="RIBOSOMAL_L30E_2"/>
    <property type="match status" value="1"/>
</dbReference>
<proteinExistence type="inferred from homology"/>
<sequence length="106" mass="11570">MRRRSSMDINRAIRVAVDTGNVVLGTKQAIKNIKHGEGQLVIVADNCAKDVKEDIFYYTKLSETPVYTHQATSIELGAICGKPFPVSALLVLEPGNSAILNVNNEE</sequence>